<organism>
    <name type="scientific">Fusobacterium nucleatum subsp. nucleatum (strain ATCC 25586 / DSM 15643 / BCRC 10681 / CIP 101130 / JCM 8532 / KCTC 2640 / LMG 13131 / VPI 4355)</name>
    <dbReference type="NCBI Taxonomy" id="190304"/>
    <lineage>
        <taxon>Bacteria</taxon>
        <taxon>Fusobacteriati</taxon>
        <taxon>Fusobacteriota</taxon>
        <taxon>Fusobacteriia</taxon>
        <taxon>Fusobacteriales</taxon>
        <taxon>Fusobacteriaceae</taxon>
        <taxon>Fusobacterium</taxon>
    </lineage>
</organism>
<proteinExistence type="inferred from homology"/>
<comment type="function">
    <text evidence="1">Binds the 23S rRNA.</text>
</comment>
<comment type="subunit">
    <text evidence="1">Part of the 50S ribosomal subunit.</text>
</comment>
<comment type="similarity">
    <text evidence="2">Belongs to the bacterial ribosomal protein bL31 family. Type A subfamily.</text>
</comment>
<name>RL31_FUSNN</name>
<accession>Q8RG36</accession>
<feature type="chain" id="PRO_0000173107" description="Large ribosomal subunit protein bL31">
    <location>
        <begin position="1"/>
        <end position="81"/>
    </location>
</feature>
<evidence type="ECO:0000250" key="1"/>
<evidence type="ECO:0000305" key="2"/>
<sequence>MKKGIHPEFDLVVFEDMAGNQFLTRSTKIPKETTTFEGKEYPVIKVAVSSKSHPFYTGEQRFVDTAGRVDKFNKKFNLGKK</sequence>
<keyword id="KW-1185">Reference proteome</keyword>
<keyword id="KW-0687">Ribonucleoprotein</keyword>
<keyword id="KW-0689">Ribosomal protein</keyword>
<keyword id="KW-0694">RNA-binding</keyword>
<keyword id="KW-0699">rRNA-binding</keyword>
<protein>
    <recommendedName>
        <fullName evidence="2">Large ribosomal subunit protein bL31</fullName>
    </recommendedName>
    <alternativeName>
        <fullName>50S ribosomal protein L31</fullName>
    </alternativeName>
</protein>
<dbReference type="EMBL" id="AE009951">
    <property type="protein sequence ID" value="AAL94678.1"/>
    <property type="molecule type" value="Genomic_DNA"/>
</dbReference>
<dbReference type="RefSeq" id="NP_603379.1">
    <property type="nucleotide sequence ID" value="NC_003454.1"/>
</dbReference>
<dbReference type="RefSeq" id="WP_005902388.1">
    <property type="nucleotide sequence ID" value="NZ_OZ209243.1"/>
</dbReference>
<dbReference type="SMR" id="Q8RG36"/>
<dbReference type="FunCoup" id="Q8RG36">
    <property type="interactions" value="63"/>
</dbReference>
<dbReference type="STRING" id="190304.FN0482"/>
<dbReference type="PaxDb" id="190304-FN0482"/>
<dbReference type="EnsemblBacteria" id="AAL94678">
    <property type="protein sequence ID" value="AAL94678"/>
    <property type="gene ID" value="FN0482"/>
</dbReference>
<dbReference type="KEGG" id="fnu:FN0482"/>
<dbReference type="PATRIC" id="fig|190304.8.peg.1052"/>
<dbReference type="eggNOG" id="COG0254">
    <property type="taxonomic scope" value="Bacteria"/>
</dbReference>
<dbReference type="HOGENOM" id="CLU_114306_2_2_0"/>
<dbReference type="InParanoid" id="Q8RG36"/>
<dbReference type="BioCyc" id="FNUC190304:G1FZS-1075-MONOMER"/>
<dbReference type="Proteomes" id="UP000002521">
    <property type="component" value="Chromosome"/>
</dbReference>
<dbReference type="GO" id="GO:1990904">
    <property type="term" value="C:ribonucleoprotein complex"/>
    <property type="evidence" value="ECO:0007669"/>
    <property type="project" value="UniProtKB-KW"/>
</dbReference>
<dbReference type="GO" id="GO:0005840">
    <property type="term" value="C:ribosome"/>
    <property type="evidence" value="ECO:0007669"/>
    <property type="project" value="UniProtKB-KW"/>
</dbReference>
<dbReference type="GO" id="GO:0019843">
    <property type="term" value="F:rRNA binding"/>
    <property type="evidence" value="ECO:0007669"/>
    <property type="project" value="UniProtKB-KW"/>
</dbReference>
<dbReference type="GO" id="GO:0003735">
    <property type="term" value="F:structural constituent of ribosome"/>
    <property type="evidence" value="ECO:0007669"/>
    <property type="project" value="InterPro"/>
</dbReference>
<dbReference type="GO" id="GO:0006412">
    <property type="term" value="P:translation"/>
    <property type="evidence" value="ECO:0007669"/>
    <property type="project" value="InterPro"/>
</dbReference>
<dbReference type="Gene3D" id="4.10.830.30">
    <property type="entry name" value="Ribosomal protein L31"/>
    <property type="match status" value="1"/>
</dbReference>
<dbReference type="InterPro" id="IPR034704">
    <property type="entry name" value="Ribosomal_bL28/bL31-like_sf"/>
</dbReference>
<dbReference type="InterPro" id="IPR002150">
    <property type="entry name" value="Ribosomal_bL31"/>
</dbReference>
<dbReference type="InterPro" id="IPR027493">
    <property type="entry name" value="Ribosomal_bL31_B"/>
</dbReference>
<dbReference type="InterPro" id="IPR042105">
    <property type="entry name" value="Ribosomal_bL31_sf"/>
</dbReference>
<dbReference type="NCBIfam" id="TIGR00105">
    <property type="entry name" value="L31"/>
    <property type="match status" value="1"/>
</dbReference>
<dbReference type="NCBIfam" id="NF002462">
    <property type="entry name" value="PRK01678.1"/>
    <property type="match status" value="1"/>
</dbReference>
<dbReference type="PANTHER" id="PTHR33280">
    <property type="entry name" value="50S RIBOSOMAL PROTEIN L31, CHLOROPLASTIC"/>
    <property type="match status" value="1"/>
</dbReference>
<dbReference type="PANTHER" id="PTHR33280:SF1">
    <property type="entry name" value="LARGE RIBOSOMAL SUBUNIT PROTEIN BL31C"/>
    <property type="match status" value="1"/>
</dbReference>
<dbReference type="Pfam" id="PF01197">
    <property type="entry name" value="Ribosomal_L31"/>
    <property type="match status" value="1"/>
</dbReference>
<dbReference type="PRINTS" id="PR01249">
    <property type="entry name" value="RIBOSOMALL31"/>
</dbReference>
<dbReference type="SUPFAM" id="SSF143800">
    <property type="entry name" value="L28p-like"/>
    <property type="match status" value="1"/>
</dbReference>
<reference key="1">
    <citation type="journal article" date="2002" name="J. Bacteriol.">
        <title>Genome sequence and analysis of the oral bacterium Fusobacterium nucleatum strain ATCC 25586.</title>
        <authorList>
            <person name="Kapatral V."/>
            <person name="Anderson I."/>
            <person name="Ivanova N."/>
            <person name="Reznik G."/>
            <person name="Los T."/>
            <person name="Lykidis A."/>
            <person name="Bhattacharyya A."/>
            <person name="Bartman A."/>
            <person name="Gardner W."/>
            <person name="Grechkin G."/>
            <person name="Zhu L."/>
            <person name="Vasieva O."/>
            <person name="Chu L."/>
            <person name="Kogan Y."/>
            <person name="Chaga O."/>
            <person name="Goltsman E."/>
            <person name="Bernal A."/>
            <person name="Larsen N."/>
            <person name="D'Souza M."/>
            <person name="Walunas T."/>
            <person name="Pusch G."/>
            <person name="Haselkorn R."/>
            <person name="Fonstein M."/>
            <person name="Kyrpides N.C."/>
            <person name="Overbeek R."/>
        </authorList>
    </citation>
    <scope>NUCLEOTIDE SEQUENCE [LARGE SCALE GENOMIC DNA]</scope>
    <source>
        <strain>ATCC 25586 / DSM 15643 / BCRC 10681 / CIP 101130 / JCM 8532 / KCTC 2640 / LMG 13131 / VPI 4355</strain>
    </source>
</reference>
<gene>
    <name type="primary">rpmE</name>
    <name type="ordered locus">FN0482</name>
</gene>